<gene>
    <name type="primary">SAP18</name>
    <name type="ordered locus">Os07g0169100</name>
    <name type="ordered locus">LOC_Os07g07370</name>
</gene>
<organism>
    <name type="scientific">Oryza sativa subsp. japonica</name>
    <name type="common">Rice</name>
    <dbReference type="NCBI Taxonomy" id="39947"/>
    <lineage>
        <taxon>Eukaryota</taxon>
        <taxon>Viridiplantae</taxon>
        <taxon>Streptophyta</taxon>
        <taxon>Embryophyta</taxon>
        <taxon>Tracheophyta</taxon>
        <taxon>Spermatophyta</taxon>
        <taxon>Magnoliopsida</taxon>
        <taxon>Liliopsida</taxon>
        <taxon>Poales</taxon>
        <taxon>Poaceae</taxon>
        <taxon>BOP clade</taxon>
        <taxon>Oryzoideae</taxon>
        <taxon>Oryzeae</taxon>
        <taxon>Oryzinae</taxon>
        <taxon>Oryza</taxon>
        <taxon>Oryza sativa</taxon>
    </lineage>
</organism>
<name>SAP18_ORYSJ</name>
<protein>
    <recommendedName>
        <fullName>Zinc finger A20 domain-containing stress-associated protein 18</fullName>
        <shortName>OsSAP18</shortName>
    </recommendedName>
</protein>
<evidence type="ECO:0000250" key="1"/>
<evidence type="ECO:0000255" key="2">
    <source>
        <dbReference type="PROSITE-ProRule" id="PRU00451"/>
    </source>
</evidence>
<evidence type="ECO:0000269" key="3">
    <source>
    </source>
</evidence>
<accession>P0C282</accession>
<accession>A0A0P0X307</accession>
<dbReference type="EMBL" id="AP005840">
    <property type="status" value="NOT_ANNOTATED_CDS"/>
    <property type="molecule type" value="Genomic_DNA"/>
</dbReference>
<dbReference type="EMBL" id="AP014963">
    <property type="protein sequence ID" value="BAT00227.1"/>
    <property type="molecule type" value="Genomic_DNA"/>
</dbReference>
<dbReference type="STRING" id="39947.P0C282"/>
<dbReference type="PaxDb" id="39947-P0C282"/>
<dbReference type="EnsemblPlants" id="Os07t0169100-00">
    <property type="protein sequence ID" value="Os07t0169100-00"/>
    <property type="gene ID" value="Os07g0169100"/>
</dbReference>
<dbReference type="Gramene" id="Os07t0169100-00">
    <property type="protein sequence ID" value="Os07t0169100-00"/>
    <property type="gene ID" value="Os07g0169100"/>
</dbReference>
<dbReference type="HOGENOM" id="CLU_1362405_0_0_1"/>
<dbReference type="InParanoid" id="P0C282"/>
<dbReference type="Proteomes" id="UP000000763">
    <property type="component" value="Chromosome 7"/>
</dbReference>
<dbReference type="Proteomes" id="UP000059680">
    <property type="component" value="Chromosome 7"/>
</dbReference>
<dbReference type="GO" id="GO:0003677">
    <property type="term" value="F:DNA binding"/>
    <property type="evidence" value="ECO:0007669"/>
    <property type="project" value="InterPro"/>
</dbReference>
<dbReference type="GO" id="GO:0008270">
    <property type="term" value="F:zinc ion binding"/>
    <property type="evidence" value="ECO:0007669"/>
    <property type="project" value="UniProtKB-KW"/>
</dbReference>
<dbReference type="Gene3D" id="1.20.5.4770">
    <property type="match status" value="1"/>
</dbReference>
<dbReference type="InterPro" id="IPR002653">
    <property type="entry name" value="Znf_A20"/>
</dbReference>
<dbReference type="Pfam" id="PF01754">
    <property type="entry name" value="zf-A20"/>
    <property type="match status" value="1"/>
</dbReference>
<dbReference type="SMART" id="SM00259">
    <property type="entry name" value="ZnF_A20"/>
    <property type="match status" value="1"/>
</dbReference>
<dbReference type="SUPFAM" id="SSF57716">
    <property type="entry name" value="Glucocorticoid receptor-like (DNA-binding domain)"/>
    <property type="match status" value="1"/>
</dbReference>
<dbReference type="PROSITE" id="PS51036">
    <property type="entry name" value="ZF_A20"/>
    <property type="match status" value="1"/>
</dbReference>
<feature type="chain" id="PRO_0000269881" description="Zinc finger A20 domain-containing stress-associated protein 18">
    <location>
        <begin position="1"/>
        <end position="201"/>
    </location>
</feature>
<feature type="zinc finger region" description="A20-type" evidence="2">
    <location>
        <begin position="11"/>
        <end position="45"/>
    </location>
</feature>
<feature type="binding site" evidence="2">
    <location>
        <position position="17"/>
    </location>
    <ligand>
        <name>Zn(2+)</name>
        <dbReference type="ChEBI" id="CHEBI:29105"/>
    </ligand>
</feature>
<feature type="binding site" evidence="2">
    <location>
        <position position="21"/>
    </location>
    <ligand>
        <name>Zn(2+)</name>
        <dbReference type="ChEBI" id="CHEBI:29105"/>
    </ligand>
</feature>
<feature type="binding site" evidence="2">
    <location>
        <position position="33"/>
    </location>
    <ligand>
        <name>Zn(2+)</name>
        <dbReference type="ChEBI" id="CHEBI:29105"/>
    </ligand>
</feature>
<feature type="binding site" evidence="2">
    <location>
        <position position="36"/>
    </location>
    <ligand>
        <name>Zn(2+)</name>
        <dbReference type="ChEBI" id="CHEBI:29105"/>
    </ligand>
</feature>
<proteinExistence type="evidence at transcript level"/>
<reference key="1">
    <citation type="journal article" date="2005" name="Nature">
        <title>The map-based sequence of the rice genome.</title>
        <authorList>
            <consortium name="International rice genome sequencing project (IRGSP)"/>
        </authorList>
    </citation>
    <scope>NUCLEOTIDE SEQUENCE [LARGE SCALE GENOMIC DNA]</scope>
    <source>
        <strain>cv. Nipponbare</strain>
    </source>
</reference>
<reference key="2">
    <citation type="journal article" date="2013" name="Rice">
        <title>Improvement of the Oryza sativa Nipponbare reference genome using next generation sequence and optical map data.</title>
        <authorList>
            <person name="Kawahara Y."/>
            <person name="de la Bastide M."/>
            <person name="Hamilton J.P."/>
            <person name="Kanamori H."/>
            <person name="McCombie W.R."/>
            <person name="Ouyang S."/>
            <person name="Schwartz D.C."/>
            <person name="Tanaka T."/>
            <person name="Wu J."/>
            <person name="Zhou S."/>
            <person name="Childs K.L."/>
            <person name="Davidson R.M."/>
            <person name="Lin H."/>
            <person name="Quesada-Ocampo L."/>
            <person name="Vaillancourt B."/>
            <person name="Sakai H."/>
            <person name="Lee S.S."/>
            <person name="Kim J."/>
            <person name="Numa H."/>
            <person name="Itoh T."/>
            <person name="Buell C.R."/>
            <person name="Matsumoto T."/>
        </authorList>
    </citation>
    <scope>GENOME REANNOTATION</scope>
    <source>
        <strain>cv. Nipponbare</strain>
    </source>
</reference>
<reference key="3">
    <citation type="journal article" date="2006" name="Mol. Genet. Genomics">
        <title>Genome-wide analysis of the stress associated protein (SAP) gene family containing A20/AN1 zinc-finger(s) in rice and their phylogenetic relationship with Arabidopsis.</title>
        <authorList>
            <person name="Vij S."/>
            <person name="Tyagi A.K."/>
        </authorList>
    </citation>
    <scope>GENE FAMILY</scope>
    <scope>INDUCTION</scope>
</reference>
<sequence length="201" mass="21954">MAGSKMQAGDGGGAAMCAAGCGFFGSAATGGLCSKCYKEQQPQPRHHISSAPPPGTATKWWTRTFDDKSSHGKINDNNINFLNKTNSQTLVKKSTASYIKIRKKYMNVDNARNSYNMKRRKYELVRLSSALGTTPKTARNNRIHERGAQALGIEGVRAFTLVGWHLLPTNEQAEHGDHLPIIPIVEAANRNVWTLGRGASE</sequence>
<keyword id="KW-0479">Metal-binding</keyword>
<keyword id="KW-1185">Reference proteome</keyword>
<keyword id="KW-0346">Stress response</keyword>
<keyword id="KW-0862">Zinc</keyword>
<keyword id="KW-0863">Zinc-finger</keyword>
<comment type="function">
    <text evidence="1">May be involved in environmental stress response.</text>
</comment>
<comment type="induction">
    <text evidence="3">By dehydration and salt stress.</text>
</comment>